<organism>
    <name type="scientific">Porphyra purpurea</name>
    <name type="common">Red seaweed</name>
    <name type="synonym">Ulva purpurea</name>
    <dbReference type="NCBI Taxonomy" id="2787"/>
    <lineage>
        <taxon>Eukaryota</taxon>
        <taxon>Rhodophyta</taxon>
        <taxon>Bangiophyceae</taxon>
        <taxon>Bangiales</taxon>
        <taxon>Bangiaceae</taxon>
        <taxon>Porphyra</taxon>
    </lineage>
</organism>
<keyword id="KW-0150">Chloroplast</keyword>
<keyword id="KW-0934">Plastid</keyword>
<keyword id="KW-0677">Repeat</keyword>
<keyword id="KW-0687">Ribonucleoprotein</keyword>
<keyword id="KW-0689">Ribosomal protein</keyword>
<gene>
    <name type="primary">rps1</name>
</gene>
<geneLocation type="chloroplast"/>
<sequence length="263" mass="29692">MTKNNESFTHRNFAAVLQKYKYDLNLGDIVAGTIFSFELNGVLVDIGTPVSAYLPIQEVSSNQELNNFNSLNINDTREFFLLDYNVESRQLILSIRRLEYIRAWKRIRQLLAEDSLLDVRIKGFNKGGMIVNLEGISGFVPNSHLNNFSKNTSSTNKFIKLKLLNVEEKSNNLILSHRRALIAQASSNLIVGNIIEGVINQITPYGLFIKAGNLKGLVHISEINVKQVERIPSQFKIGDTIKAVIIHVDKKQGRLSLSMKHLK</sequence>
<dbReference type="EMBL" id="U38804">
    <property type="protein sequence ID" value="AAC08231.1"/>
    <property type="molecule type" value="Genomic_DNA"/>
</dbReference>
<dbReference type="PIR" id="S73266">
    <property type="entry name" value="S73266"/>
</dbReference>
<dbReference type="RefSeq" id="NP_053955.1">
    <property type="nucleotide sequence ID" value="NC_000925.1"/>
</dbReference>
<dbReference type="SMR" id="P51345"/>
<dbReference type="GeneID" id="809981"/>
<dbReference type="GO" id="GO:0009507">
    <property type="term" value="C:chloroplast"/>
    <property type="evidence" value="ECO:0007669"/>
    <property type="project" value="UniProtKB-SubCell"/>
</dbReference>
<dbReference type="GO" id="GO:1990904">
    <property type="term" value="C:ribonucleoprotein complex"/>
    <property type="evidence" value="ECO:0007669"/>
    <property type="project" value="UniProtKB-KW"/>
</dbReference>
<dbReference type="GO" id="GO:0005840">
    <property type="term" value="C:ribosome"/>
    <property type="evidence" value="ECO:0007669"/>
    <property type="project" value="UniProtKB-KW"/>
</dbReference>
<dbReference type="GO" id="GO:0003729">
    <property type="term" value="F:mRNA binding"/>
    <property type="evidence" value="ECO:0007669"/>
    <property type="project" value="TreeGrafter"/>
</dbReference>
<dbReference type="GO" id="GO:0003735">
    <property type="term" value="F:structural constituent of ribosome"/>
    <property type="evidence" value="ECO:0007669"/>
    <property type="project" value="TreeGrafter"/>
</dbReference>
<dbReference type="GO" id="GO:0006412">
    <property type="term" value="P:translation"/>
    <property type="evidence" value="ECO:0007669"/>
    <property type="project" value="TreeGrafter"/>
</dbReference>
<dbReference type="CDD" id="cd05687">
    <property type="entry name" value="S1_RPS1_repeat_ec1_hs1"/>
    <property type="match status" value="1"/>
</dbReference>
<dbReference type="CDD" id="cd04465">
    <property type="entry name" value="S1_RPS1_repeat_ec2_hs2"/>
    <property type="match status" value="1"/>
</dbReference>
<dbReference type="FunFam" id="2.40.50.140:FF:000103">
    <property type="entry name" value="protein RRP5 homolog"/>
    <property type="match status" value="1"/>
</dbReference>
<dbReference type="Gene3D" id="2.40.50.140">
    <property type="entry name" value="Nucleic acid-binding proteins"/>
    <property type="match status" value="3"/>
</dbReference>
<dbReference type="InterPro" id="IPR012340">
    <property type="entry name" value="NA-bd_OB-fold"/>
</dbReference>
<dbReference type="InterPro" id="IPR050437">
    <property type="entry name" value="Ribos_protein_bS1-like"/>
</dbReference>
<dbReference type="InterPro" id="IPR035104">
    <property type="entry name" value="Ribosomal_protein_S1-like"/>
</dbReference>
<dbReference type="InterPro" id="IPR003029">
    <property type="entry name" value="S1_domain"/>
</dbReference>
<dbReference type="PANTHER" id="PTHR10724">
    <property type="entry name" value="30S RIBOSOMAL PROTEIN S1"/>
    <property type="match status" value="1"/>
</dbReference>
<dbReference type="PANTHER" id="PTHR10724:SF7">
    <property type="entry name" value="SMALL RIBOSOMAL SUBUNIT PROTEIN BS1C"/>
    <property type="match status" value="1"/>
</dbReference>
<dbReference type="Pfam" id="PF00575">
    <property type="entry name" value="S1"/>
    <property type="match status" value="3"/>
</dbReference>
<dbReference type="PRINTS" id="PR00681">
    <property type="entry name" value="RIBOSOMALS1"/>
</dbReference>
<dbReference type="SMART" id="SM00316">
    <property type="entry name" value="S1"/>
    <property type="match status" value="3"/>
</dbReference>
<dbReference type="SUPFAM" id="SSF50249">
    <property type="entry name" value="Nucleic acid-binding proteins"/>
    <property type="match status" value="3"/>
</dbReference>
<dbReference type="PROSITE" id="PS50126">
    <property type="entry name" value="S1"/>
    <property type="match status" value="3"/>
</dbReference>
<name>RR1_PORPU</name>
<proteinExistence type="inferred from homology"/>
<evidence type="ECO:0000255" key="1">
    <source>
        <dbReference type="PROSITE-ProRule" id="PRU00180"/>
    </source>
</evidence>
<evidence type="ECO:0000305" key="2"/>
<accession>P51345</accession>
<reference key="1">
    <citation type="journal article" date="1995" name="Plant Mol. Biol. Rep.">
        <title>Complete nucleotide sequence of the Porphyra purpurea chloroplast genome.</title>
        <authorList>
            <person name="Reith M.E."/>
            <person name="Munholland J."/>
        </authorList>
    </citation>
    <scope>NUCLEOTIDE SEQUENCE [LARGE SCALE GENOMIC DNA]</scope>
    <source>
        <strain>Avonport</strain>
    </source>
</reference>
<feature type="chain" id="PRO_0000196061" description="Small ribosomal subunit protein bS1c">
    <location>
        <begin position="1"/>
        <end position="263"/>
    </location>
</feature>
<feature type="domain" description="S1 motif 1" evidence="1">
    <location>
        <begin position="27"/>
        <end position="96"/>
    </location>
</feature>
<feature type="domain" description="S1 motif 2" evidence="1">
    <location>
        <begin position="114"/>
        <end position="178"/>
    </location>
</feature>
<feature type="domain" description="S1 motif 3" evidence="1">
    <location>
        <begin position="192"/>
        <end position="260"/>
    </location>
</feature>
<comment type="subcellular location">
    <subcellularLocation>
        <location>Plastid</location>
        <location>Chloroplast</location>
    </subcellularLocation>
</comment>
<comment type="similarity">
    <text evidence="2">Belongs to the bacterial ribosomal protein bS1 family.</text>
</comment>
<protein>
    <recommendedName>
        <fullName evidence="2">Small ribosomal subunit protein bS1c</fullName>
    </recommendedName>
    <alternativeName>
        <fullName>30S ribosomal protein S1, chloroplastic</fullName>
    </alternativeName>
</protein>